<evidence type="ECO:0000255" key="1">
    <source>
        <dbReference type="HAMAP-Rule" id="MF_00131"/>
    </source>
</evidence>
<gene>
    <name evidence="1" type="primary">trpA</name>
    <name type="ordered locus">MW1260</name>
</gene>
<dbReference type="EC" id="4.2.1.20" evidence="1"/>
<dbReference type="EMBL" id="BA000033">
    <property type="protein sequence ID" value="BAB95125.1"/>
    <property type="molecule type" value="Genomic_DNA"/>
</dbReference>
<dbReference type="RefSeq" id="WP_000163627.1">
    <property type="nucleotide sequence ID" value="NC_003923.1"/>
</dbReference>
<dbReference type="SMR" id="Q8NWU1"/>
<dbReference type="KEGG" id="sam:MW1260"/>
<dbReference type="HOGENOM" id="CLU_016734_0_0_9"/>
<dbReference type="UniPathway" id="UPA00035">
    <property type="reaction ID" value="UER00044"/>
</dbReference>
<dbReference type="GO" id="GO:0005829">
    <property type="term" value="C:cytosol"/>
    <property type="evidence" value="ECO:0007669"/>
    <property type="project" value="TreeGrafter"/>
</dbReference>
<dbReference type="GO" id="GO:0004834">
    <property type="term" value="F:tryptophan synthase activity"/>
    <property type="evidence" value="ECO:0007669"/>
    <property type="project" value="UniProtKB-UniRule"/>
</dbReference>
<dbReference type="CDD" id="cd04724">
    <property type="entry name" value="Tryptophan_synthase_alpha"/>
    <property type="match status" value="1"/>
</dbReference>
<dbReference type="Gene3D" id="3.20.20.70">
    <property type="entry name" value="Aldolase class I"/>
    <property type="match status" value="1"/>
</dbReference>
<dbReference type="HAMAP" id="MF_00131">
    <property type="entry name" value="Trp_synth_alpha"/>
    <property type="match status" value="1"/>
</dbReference>
<dbReference type="InterPro" id="IPR013785">
    <property type="entry name" value="Aldolase_TIM"/>
</dbReference>
<dbReference type="InterPro" id="IPR011060">
    <property type="entry name" value="RibuloseP-bd_barrel"/>
</dbReference>
<dbReference type="InterPro" id="IPR018204">
    <property type="entry name" value="Trp_synthase_alpha_AS"/>
</dbReference>
<dbReference type="InterPro" id="IPR002028">
    <property type="entry name" value="Trp_synthase_suA"/>
</dbReference>
<dbReference type="NCBIfam" id="TIGR00262">
    <property type="entry name" value="trpA"/>
    <property type="match status" value="1"/>
</dbReference>
<dbReference type="PANTHER" id="PTHR43406:SF1">
    <property type="entry name" value="TRYPTOPHAN SYNTHASE ALPHA CHAIN, CHLOROPLASTIC"/>
    <property type="match status" value="1"/>
</dbReference>
<dbReference type="PANTHER" id="PTHR43406">
    <property type="entry name" value="TRYPTOPHAN SYNTHASE, ALPHA CHAIN"/>
    <property type="match status" value="1"/>
</dbReference>
<dbReference type="Pfam" id="PF00290">
    <property type="entry name" value="Trp_syntA"/>
    <property type="match status" value="1"/>
</dbReference>
<dbReference type="SUPFAM" id="SSF51366">
    <property type="entry name" value="Ribulose-phoshate binding barrel"/>
    <property type="match status" value="1"/>
</dbReference>
<dbReference type="PROSITE" id="PS00167">
    <property type="entry name" value="TRP_SYNTHASE_ALPHA"/>
    <property type="match status" value="1"/>
</dbReference>
<protein>
    <recommendedName>
        <fullName evidence="1">Tryptophan synthase alpha chain</fullName>
        <ecNumber evidence="1">4.2.1.20</ecNumber>
    </recommendedName>
</protein>
<accession>Q8NWU1</accession>
<comment type="function">
    <text evidence="1">The alpha subunit is responsible for the aldol cleavage of indoleglycerol phosphate to indole and glyceraldehyde 3-phosphate.</text>
</comment>
<comment type="catalytic activity">
    <reaction evidence="1">
        <text>(1S,2R)-1-C-(indol-3-yl)glycerol 3-phosphate + L-serine = D-glyceraldehyde 3-phosphate + L-tryptophan + H2O</text>
        <dbReference type="Rhea" id="RHEA:10532"/>
        <dbReference type="ChEBI" id="CHEBI:15377"/>
        <dbReference type="ChEBI" id="CHEBI:33384"/>
        <dbReference type="ChEBI" id="CHEBI:57912"/>
        <dbReference type="ChEBI" id="CHEBI:58866"/>
        <dbReference type="ChEBI" id="CHEBI:59776"/>
        <dbReference type="EC" id="4.2.1.20"/>
    </reaction>
</comment>
<comment type="pathway">
    <text evidence="1">Amino-acid biosynthesis; L-tryptophan biosynthesis; L-tryptophan from chorismate: step 5/5.</text>
</comment>
<comment type="subunit">
    <text evidence="1">Tetramer of two alpha and two beta chains.</text>
</comment>
<comment type="similarity">
    <text evidence="1">Belongs to the TrpA family.</text>
</comment>
<keyword id="KW-0028">Amino-acid biosynthesis</keyword>
<keyword id="KW-0057">Aromatic amino acid biosynthesis</keyword>
<keyword id="KW-0456">Lyase</keyword>
<keyword id="KW-0822">Tryptophan biosynthesis</keyword>
<feature type="chain" id="PRO_0000098848" description="Tryptophan synthase alpha chain">
    <location>
        <begin position="1"/>
        <end position="242"/>
    </location>
</feature>
<feature type="active site" description="Proton acceptor" evidence="1">
    <location>
        <position position="31"/>
    </location>
</feature>
<feature type="active site" description="Proton acceptor" evidence="1">
    <location>
        <position position="42"/>
    </location>
</feature>
<name>TRPA_STAAW</name>
<proteinExistence type="inferred from homology"/>
<organism>
    <name type="scientific">Staphylococcus aureus (strain MW2)</name>
    <dbReference type="NCBI Taxonomy" id="196620"/>
    <lineage>
        <taxon>Bacteria</taxon>
        <taxon>Bacillati</taxon>
        <taxon>Bacillota</taxon>
        <taxon>Bacilli</taxon>
        <taxon>Bacillales</taxon>
        <taxon>Staphylococcaceae</taxon>
        <taxon>Staphylococcus</taxon>
    </lineage>
</organism>
<sequence>MTKLFIPYIMGNKDLIENATLLSENGADIIEIGVPFSDPVADGPVIMEAGQQAIKQGITIDYIFNQLEKHGDQIKCNYVLMTYYNIICHYGEQAFFEKCRDTGVYGLIIPDLPYELSQRLKQQFSHYGVKIISLVAMTTDDKRIKDIVSHAEGFIYTVTMNATTGQNGAFHPELKRKIESIKAIANVPVVAGFGIRTPQHVADIKEVADGIVIGSEIVKRFKSNTREEIIKYLQSIQQTLNN</sequence>
<reference key="1">
    <citation type="journal article" date="2002" name="Lancet">
        <title>Genome and virulence determinants of high virulence community-acquired MRSA.</title>
        <authorList>
            <person name="Baba T."/>
            <person name="Takeuchi F."/>
            <person name="Kuroda M."/>
            <person name="Yuzawa H."/>
            <person name="Aoki K."/>
            <person name="Oguchi A."/>
            <person name="Nagai Y."/>
            <person name="Iwama N."/>
            <person name="Asano K."/>
            <person name="Naimi T."/>
            <person name="Kuroda H."/>
            <person name="Cui L."/>
            <person name="Yamamoto K."/>
            <person name="Hiramatsu K."/>
        </authorList>
    </citation>
    <scope>NUCLEOTIDE SEQUENCE [LARGE SCALE GENOMIC DNA]</scope>
    <source>
        <strain>MW2</strain>
    </source>
</reference>